<sequence>MNNIHAIILAAGKGTRMNSTKPKVLQILSNNTLLEHVLSQVKTLCNKIHIAYGFEGKQVQQKINNPSINWVKQVKQLGTGHAVAQVMPYIEGNSISLILYGDVPLIKRSTLYDLINKTQQSGIALLSVILNNPTGYGRIIRNNKQIQAIVEQKDASNMQLNINEVNTGIMAINSQLLKQYLNEIDSRNTQGELYLTDIIACAAADKKTISSIISKNKFEVLGVNDKVQLAELERLFQKDQAIQFMKQGLGLKDPTRFDCRGTLTFGQNCEIDVNTLIKGKVALGNSTTIEPNCIIKNTIIGNHVSIFPNCVIEDAVIGEGVTIGPFVHIRPQTHIQTHAKIGNFVEIKKSTIGKNTKISHLSYVGDSTIGKNVNIGAGVITCNYDGVNKHQTIIADGAFIGSDSQLIAPIKIGKNAKIGAGSTITKSVSENQLSVSRTKQKNLKYRSKK</sequence>
<reference key="1">
    <citation type="journal article" date="2007" name="Curr. Biol.">
        <title>Reduced genome of the thioautotrophic intracellular symbiont in a deep-sea clam, Calyptogena okutanii.</title>
        <authorList>
            <person name="Kuwahara H."/>
            <person name="Yoshida T."/>
            <person name="Takaki Y."/>
            <person name="Shimamura S."/>
            <person name="Nishi S."/>
            <person name="Harada M."/>
            <person name="Matsuyama K."/>
            <person name="Takishita K."/>
            <person name="Kawato M."/>
            <person name="Uematsu K."/>
            <person name="Fujiwara Y."/>
            <person name="Sato T."/>
            <person name="Kato C."/>
            <person name="Kitagawa M."/>
            <person name="Kato I."/>
            <person name="Maruyama T."/>
        </authorList>
    </citation>
    <scope>NUCLEOTIDE SEQUENCE [LARGE SCALE GENOMIC DNA]</scope>
    <source>
        <strain>HA</strain>
    </source>
</reference>
<accession>A5CVK9</accession>
<dbReference type="EC" id="2.7.7.23" evidence="1"/>
<dbReference type="EC" id="2.3.1.157" evidence="1"/>
<dbReference type="EMBL" id="AP009247">
    <property type="protein sequence ID" value="BAF62031.1"/>
    <property type="molecule type" value="Genomic_DNA"/>
</dbReference>
<dbReference type="RefSeq" id="WP_011930300.1">
    <property type="nucleotide sequence ID" value="NC_009465.1"/>
</dbReference>
<dbReference type="SMR" id="A5CVK9"/>
<dbReference type="STRING" id="412965.COSY_0932"/>
<dbReference type="KEGG" id="vok:COSY_0932"/>
<dbReference type="eggNOG" id="COG1207">
    <property type="taxonomic scope" value="Bacteria"/>
</dbReference>
<dbReference type="HOGENOM" id="CLU_029499_15_2_6"/>
<dbReference type="OrthoDB" id="9775031at2"/>
<dbReference type="UniPathway" id="UPA00113">
    <property type="reaction ID" value="UER00532"/>
</dbReference>
<dbReference type="UniPathway" id="UPA00113">
    <property type="reaction ID" value="UER00533"/>
</dbReference>
<dbReference type="UniPathway" id="UPA00973"/>
<dbReference type="Proteomes" id="UP000000247">
    <property type="component" value="Chromosome"/>
</dbReference>
<dbReference type="GO" id="GO:0005737">
    <property type="term" value="C:cytoplasm"/>
    <property type="evidence" value="ECO:0007669"/>
    <property type="project" value="UniProtKB-SubCell"/>
</dbReference>
<dbReference type="GO" id="GO:0016020">
    <property type="term" value="C:membrane"/>
    <property type="evidence" value="ECO:0007669"/>
    <property type="project" value="GOC"/>
</dbReference>
<dbReference type="GO" id="GO:0019134">
    <property type="term" value="F:glucosamine-1-phosphate N-acetyltransferase activity"/>
    <property type="evidence" value="ECO:0007669"/>
    <property type="project" value="UniProtKB-UniRule"/>
</dbReference>
<dbReference type="GO" id="GO:0000287">
    <property type="term" value="F:magnesium ion binding"/>
    <property type="evidence" value="ECO:0007669"/>
    <property type="project" value="UniProtKB-UniRule"/>
</dbReference>
<dbReference type="GO" id="GO:0003977">
    <property type="term" value="F:UDP-N-acetylglucosamine diphosphorylase activity"/>
    <property type="evidence" value="ECO:0007669"/>
    <property type="project" value="UniProtKB-UniRule"/>
</dbReference>
<dbReference type="GO" id="GO:0000902">
    <property type="term" value="P:cell morphogenesis"/>
    <property type="evidence" value="ECO:0007669"/>
    <property type="project" value="UniProtKB-UniRule"/>
</dbReference>
<dbReference type="GO" id="GO:0071555">
    <property type="term" value="P:cell wall organization"/>
    <property type="evidence" value="ECO:0007669"/>
    <property type="project" value="UniProtKB-KW"/>
</dbReference>
<dbReference type="GO" id="GO:0009245">
    <property type="term" value="P:lipid A biosynthetic process"/>
    <property type="evidence" value="ECO:0007669"/>
    <property type="project" value="UniProtKB-UniRule"/>
</dbReference>
<dbReference type="GO" id="GO:0009252">
    <property type="term" value="P:peptidoglycan biosynthetic process"/>
    <property type="evidence" value="ECO:0007669"/>
    <property type="project" value="UniProtKB-UniRule"/>
</dbReference>
<dbReference type="GO" id="GO:0008360">
    <property type="term" value="P:regulation of cell shape"/>
    <property type="evidence" value="ECO:0007669"/>
    <property type="project" value="UniProtKB-KW"/>
</dbReference>
<dbReference type="GO" id="GO:0006048">
    <property type="term" value="P:UDP-N-acetylglucosamine biosynthetic process"/>
    <property type="evidence" value="ECO:0007669"/>
    <property type="project" value="UniProtKB-UniPathway"/>
</dbReference>
<dbReference type="CDD" id="cd02540">
    <property type="entry name" value="GT2_GlmU_N_bac"/>
    <property type="match status" value="1"/>
</dbReference>
<dbReference type="CDD" id="cd03353">
    <property type="entry name" value="LbH_GlmU_C"/>
    <property type="match status" value="1"/>
</dbReference>
<dbReference type="Gene3D" id="2.160.10.10">
    <property type="entry name" value="Hexapeptide repeat proteins"/>
    <property type="match status" value="1"/>
</dbReference>
<dbReference type="Gene3D" id="3.90.550.10">
    <property type="entry name" value="Spore Coat Polysaccharide Biosynthesis Protein SpsA, Chain A"/>
    <property type="match status" value="1"/>
</dbReference>
<dbReference type="HAMAP" id="MF_01631">
    <property type="entry name" value="GlmU"/>
    <property type="match status" value="1"/>
</dbReference>
<dbReference type="InterPro" id="IPR005882">
    <property type="entry name" value="Bifunctional_GlmU"/>
</dbReference>
<dbReference type="InterPro" id="IPR050065">
    <property type="entry name" value="GlmU-like"/>
</dbReference>
<dbReference type="InterPro" id="IPR038009">
    <property type="entry name" value="GlmU_C_LbH"/>
</dbReference>
<dbReference type="InterPro" id="IPR001451">
    <property type="entry name" value="Hexapep"/>
</dbReference>
<dbReference type="InterPro" id="IPR018357">
    <property type="entry name" value="Hexapep_transf_CS"/>
</dbReference>
<dbReference type="InterPro" id="IPR025877">
    <property type="entry name" value="MobA-like_NTP_Trfase"/>
</dbReference>
<dbReference type="InterPro" id="IPR029044">
    <property type="entry name" value="Nucleotide-diphossugar_trans"/>
</dbReference>
<dbReference type="InterPro" id="IPR011004">
    <property type="entry name" value="Trimer_LpxA-like_sf"/>
</dbReference>
<dbReference type="NCBIfam" id="TIGR01173">
    <property type="entry name" value="glmU"/>
    <property type="match status" value="1"/>
</dbReference>
<dbReference type="PANTHER" id="PTHR43584:SF3">
    <property type="entry name" value="BIFUNCTIONAL PROTEIN GLMU"/>
    <property type="match status" value="1"/>
</dbReference>
<dbReference type="PANTHER" id="PTHR43584">
    <property type="entry name" value="NUCLEOTIDYL TRANSFERASE"/>
    <property type="match status" value="1"/>
</dbReference>
<dbReference type="Pfam" id="PF00132">
    <property type="entry name" value="Hexapep"/>
    <property type="match status" value="2"/>
</dbReference>
<dbReference type="Pfam" id="PF12804">
    <property type="entry name" value="NTP_transf_3"/>
    <property type="match status" value="1"/>
</dbReference>
<dbReference type="SUPFAM" id="SSF53448">
    <property type="entry name" value="Nucleotide-diphospho-sugar transferases"/>
    <property type="match status" value="1"/>
</dbReference>
<dbReference type="SUPFAM" id="SSF51161">
    <property type="entry name" value="Trimeric LpxA-like enzymes"/>
    <property type="match status" value="1"/>
</dbReference>
<dbReference type="PROSITE" id="PS00101">
    <property type="entry name" value="HEXAPEP_TRANSFERASES"/>
    <property type="match status" value="1"/>
</dbReference>
<keyword id="KW-0012">Acyltransferase</keyword>
<keyword id="KW-0133">Cell shape</keyword>
<keyword id="KW-0961">Cell wall biogenesis/degradation</keyword>
<keyword id="KW-0963">Cytoplasm</keyword>
<keyword id="KW-0460">Magnesium</keyword>
<keyword id="KW-0479">Metal-binding</keyword>
<keyword id="KW-0511">Multifunctional enzyme</keyword>
<keyword id="KW-0548">Nucleotidyltransferase</keyword>
<keyword id="KW-0573">Peptidoglycan synthesis</keyword>
<keyword id="KW-1185">Reference proteome</keyword>
<keyword id="KW-0677">Repeat</keyword>
<keyword id="KW-0808">Transferase</keyword>
<proteinExistence type="inferred from homology"/>
<organism>
    <name type="scientific">Vesicomyosocius okutanii subsp. Calyptogena okutanii (strain HA)</name>
    <dbReference type="NCBI Taxonomy" id="412965"/>
    <lineage>
        <taxon>Bacteria</taxon>
        <taxon>Pseudomonadati</taxon>
        <taxon>Pseudomonadota</taxon>
        <taxon>Gammaproteobacteria</taxon>
        <taxon>Candidatus Pseudothioglobaceae</taxon>
        <taxon>Candidatus Vesicomyosocius</taxon>
    </lineage>
</organism>
<feature type="chain" id="PRO_0000337744" description="Bifunctional protein GlmU">
    <location>
        <begin position="1"/>
        <end position="449"/>
    </location>
</feature>
<feature type="region of interest" description="Pyrophosphorylase" evidence="1">
    <location>
        <begin position="1"/>
        <end position="226"/>
    </location>
</feature>
<feature type="region of interest" description="Linker" evidence="1">
    <location>
        <begin position="227"/>
        <end position="247"/>
    </location>
</feature>
<feature type="region of interest" description="N-acetyltransferase" evidence="1">
    <location>
        <begin position="248"/>
        <end position="449"/>
    </location>
</feature>
<feature type="active site" description="Proton acceptor" evidence="1">
    <location>
        <position position="360"/>
    </location>
</feature>
<feature type="binding site" evidence="1">
    <location>
        <begin position="9"/>
        <end position="12"/>
    </location>
    <ligand>
        <name>UDP-N-acetyl-alpha-D-glucosamine</name>
        <dbReference type="ChEBI" id="CHEBI:57705"/>
    </ligand>
</feature>
<feature type="binding site" evidence="1">
    <location>
        <position position="23"/>
    </location>
    <ligand>
        <name>UDP-N-acetyl-alpha-D-glucosamine</name>
        <dbReference type="ChEBI" id="CHEBI:57705"/>
    </ligand>
</feature>
<feature type="binding site" evidence="1">
    <location>
        <position position="73"/>
    </location>
    <ligand>
        <name>UDP-N-acetyl-alpha-D-glucosamine</name>
        <dbReference type="ChEBI" id="CHEBI:57705"/>
    </ligand>
</feature>
<feature type="binding site" evidence="1">
    <location>
        <begin position="78"/>
        <end position="79"/>
    </location>
    <ligand>
        <name>UDP-N-acetyl-alpha-D-glucosamine</name>
        <dbReference type="ChEBI" id="CHEBI:57705"/>
    </ligand>
</feature>
<feature type="binding site" evidence="1">
    <location>
        <begin position="100"/>
        <end position="102"/>
    </location>
    <ligand>
        <name>UDP-N-acetyl-alpha-D-glucosamine</name>
        <dbReference type="ChEBI" id="CHEBI:57705"/>
    </ligand>
</feature>
<feature type="binding site" evidence="1">
    <location>
        <position position="102"/>
    </location>
    <ligand>
        <name>Mg(2+)</name>
        <dbReference type="ChEBI" id="CHEBI:18420"/>
    </ligand>
</feature>
<feature type="binding site" evidence="1">
    <location>
        <position position="137"/>
    </location>
    <ligand>
        <name>UDP-N-acetyl-alpha-D-glucosamine</name>
        <dbReference type="ChEBI" id="CHEBI:57705"/>
    </ligand>
</feature>
<feature type="binding site" evidence="1">
    <location>
        <position position="151"/>
    </location>
    <ligand>
        <name>UDP-N-acetyl-alpha-D-glucosamine</name>
        <dbReference type="ChEBI" id="CHEBI:57705"/>
    </ligand>
</feature>
<feature type="binding site" evidence="1">
    <location>
        <position position="166"/>
    </location>
    <ligand>
        <name>UDP-N-acetyl-alpha-D-glucosamine</name>
        <dbReference type="ChEBI" id="CHEBI:57705"/>
    </ligand>
</feature>
<feature type="binding site" evidence="1">
    <location>
        <position position="224"/>
    </location>
    <ligand>
        <name>Mg(2+)</name>
        <dbReference type="ChEBI" id="CHEBI:18420"/>
    </ligand>
</feature>
<feature type="binding site" evidence="1">
    <location>
        <position position="224"/>
    </location>
    <ligand>
        <name>UDP-N-acetyl-alpha-D-glucosamine</name>
        <dbReference type="ChEBI" id="CHEBI:57705"/>
    </ligand>
</feature>
<feature type="binding site" evidence="1">
    <location>
        <position position="330"/>
    </location>
    <ligand>
        <name>UDP-N-acetyl-alpha-D-glucosamine</name>
        <dbReference type="ChEBI" id="CHEBI:57705"/>
    </ligand>
</feature>
<feature type="binding site" evidence="1">
    <location>
        <position position="348"/>
    </location>
    <ligand>
        <name>UDP-N-acetyl-alpha-D-glucosamine</name>
        <dbReference type="ChEBI" id="CHEBI:57705"/>
    </ligand>
</feature>
<feature type="binding site" evidence="1">
    <location>
        <position position="363"/>
    </location>
    <ligand>
        <name>UDP-N-acetyl-alpha-D-glucosamine</name>
        <dbReference type="ChEBI" id="CHEBI:57705"/>
    </ligand>
</feature>
<feature type="binding site" evidence="1">
    <location>
        <position position="374"/>
    </location>
    <ligand>
        <name>UDP-N-acetyl-alpha-D-glucosamine</name>
        <dbReference type="ChEBI" id="CHEBI:57705"/>
    </ligand>
</feature>
<feature type="binding site" evidence="1">
    <location>
        <position position="377"/>
    </location>
    <ligand>
        <name>acetyl-CoA</name>
        <dbReference type="ChEBI" id="CHEBI:57288"/>
    </ligand>
</feature>
<feature type="binding site" evidence="1">
    <location>
        <begin position="383"/>
        <end position="384"/>
    </location>
    <ligand>
        <name>acetyl-CoA</name>
        <dbReference type="ChEBI" id="CHEBI:57288"/>
    </ligand>
</feature>
<feature type="binding site" evidence="1">
    <location>
        <position position="402"/>
    </location>
    <ligand>
        <name>acetyl-CoA</name>
        <dbReference type="ChEBI" id="CHEBI:57288"/>
    </ligand>
</feature>
<feature type="binding site" evidence="1">
    <location>
        <position position="420"/>
    </location>
    <ligand>
        <name>acetyl-CoA</name>
        <dbReference type="ChEBI" id="CHEBI:57288"/>
    </ligand>
</feature>
<feature type="binding site" evidence="1">
    <location>
        <position position="437"/>
    </location>
    <ligand>
        <name>acetyl-CoA</name>
        <dbReference type="ChEBI" id="CHEBI:57288"/>
    </ligand>
</feature>
<evidence type="ECO:0000255" key="1">
    <source>
        <dbReference type="HAMAP-Rule" id="MF_01631"/>
    </source>
</evidence>
<protein>
    <recommendedName>
        <fullName evidence="1">Bifunctional protein GlmU</fullName>
    </recommendedName>
    <domain>
        <recommendedName>
            <fullName evidence="1">UDP-N-acetylglucosamine pyrophosphorylase</fullName>
            <ecNumber evidence="1">2.7.7.23</ecNumber>
        </recommendedName>
        <alternativeName>
            <fullName evidence="1">N-acetylglucosamine-1-phosphate uridyltransferase</fullName>
        </alternativeName>
    </domain>
    <domain>
        <recommendedName>
            <fullName evidence="1">Glucosamine-1-phosphate N-acetyltransferase</fullName>
            <ecNumber evidence="1">2.3.1.157</ecNumber>
        </recommendedName>
    </domain>
</protein>
<comment type="function">
    <text evidence="1">Catalyzes the last two sequential reactions in the de novo biosynthetic pathway for UDP-N-acetylglucosamine (UDP-GlcNAc). The C-terminal domain catalyzes the transfer of acetyl group from acetyl coenzyme A to glucosamine-1-phosphate (GlcN-1-P) to produce N-acetylglucosamine-1-phosphate (GlcNAc-1-P), which is converted into UDP-GlcNAc by the transfer of uridine 5-monophosphate (from uridine 5-triphosphate), a reaction catalyzed by the N-terminal domain.</text>
</comment>
<comment type="catalytic activity">
    <reaction evidence="1">
        <text>alpha-D-glucosamine 1-phosphate + acetyl-CoA = N-acetyl-alpha-D-glucosamine 1-phosphate + CoA + H(+)</text>
        <dbReference type="Rhea" id="RHEA:13725"/>
        <dbReference type="ChEBI" id="CHEBI:15378"/>
        <dbReference type="ChEBI" id="CHEBI:57287"/>
        <dbReference type="ChEBI" id="CHEBI:57288"/>
        <dbReference type="ChEBI" id="CHEBI:57776"/>
        <dbReference type="ChEBI" id="CHEBI:58516"/>
        <dbReference type="EC" id="2.3.1.157"/>
    </reaction>
</comment>
<comment type="catalytic activity">
    <reaction evidence="1">
        <text>N-acetyl-alpha-D-glucosamine 1-phosphate + UTP + H(+) = UDP-N-acetyl-alpha-D-glucosamine + diphosphate</text>
        <dbReference type="Rhea" id="RHEA:13509"/>
        <dbReference type="ChEBI" id="CHEBI:15378"/>
        <dbReference type="ChEBI" id="CHEBI:33019"/>
        <dbReference type="ChEBI" id="CHEBI:46398"/>
        <dbReference type="ChEBI" id="CHEBI:57705"/>
        <dbReference type="ChEBI" id="CHEBI:57776"/>
        <dbReference type="EC" id="2.7.7.23"/>
    </reaction>
</comment>
<comment type="cofactor">
    <cofactor evidence="1">
        <name>Mg(2+)</name>
        <dbReference type="ChEBI" id="CHEBI:18420"/>
    </cofactor>
    <text evidence="1">Binds 1 Mg(2+) ion per subunit.</text>
</comment>
<comment type="pathway">
    <text evidence="1">Nucleotide-sugar biosynthesis; UDP-N-acetyl-alpha-D-glucosamine biosynthesis; N-acetyl-alpha-D-glucosamine 1-phosphate from alpha-D-glucosamine 6-phosphate (route II): step 2/2.</text>
</comment>
<comment type="pathway">
    <text evidence="1">Nucleotide-sugar biosynthesis; UDP-N-acetyl-alpha-D-glucosamine biosynthesis; UDP-N-acetyl-alpha-D-glucosamine from N-acetyl-alpha-D-glucosamine 1-phosphate: step 1/1.</text>
</comment>
<comment type="pathway">
    <text evidence="1">Bacterial outer membrane biogenesis; LPS lipid A biosynthesis.</text>
</comment>
<comment type="subunit">
    <text evidence="1">Homotrimer.</text>
</comment>
<comment type="subcellular location">
    <subcellularLocation>
        <location evidence="1">Cytoplasm</location>
    </subcellularLocation>
</comment>
<comment type="similarity">
    <text evidence="1">In the N-terminal section; belongs to the N-acetylglucosamine-1-phosphate uridyltransferase family.</text>
</comment>
<comment type="similarity">
    <text evidence="1">In the C-terminal section; belongs to the transferase hexapeptide repeat family.</text>
</comment>
<name>GLMU_VESOH</name>
<gene>
    <name evidence="1" type="primary">glmU</name>
    <name type="ordered locus">COSY_0932</name>
</gene>